<gene>
    <name type="ordered locus">GDI0551</name>
    <name type="ordered locus">Gdia_1457</name>
</gene>
<evidence type="ECO:0000255" key="1">
    <source>
        <dbReference type="HAMAP-Rule" id="MF_00489"/>
    </source>
</evidence>
<keyword id="KW-1185">Reference proteome</keyword>
<proteinExistence type="inferred from homology"/>
<sequence length="154" mass="16817">MIRIFIDADACPVRDETYRVAQRHGLQTFVVSNRMIAIPSSPLIERIVVTQGMDVADDWIAEQVNAHDIVISADIPLAARCVARGACVLDPRGRILDEDAIGMALAMRNLMEDLRATGAITQGGRGFTRADRSTFLSALDTAVVRGRKRAAQAR</sequence>
<name>Y551_GLUDA</name>
<feature type="chain" id="PRO_1000081379" description="UPF0178 protein GDI0551/Gdia_1457">
    <location>
        <begin position="1"/>
        <end position="154"/>
    </location>
</feature>
<comment type="similarity">
    <text evidence="1">Belongs to the UPF0178 family.</text>
</comment>
<accession>A9H867</accession>
<accession>B5ZIJ4</accession>
<reference key="1">
    <citation type="journal article" date="2009" name="BMC Genomics">
        <title>Complete genome sequence of the sugarcane nitrogen-fixing endophyte Gluconacetobacter diazotrophicus Pal5.</title>
        <authorList>
            <person name="Bertalan M."/>
            <person name="Albano R."/>
            <person name="de Padua V."/>
            <person name="Rouws L."/>
            <person name="Rojas C."/>
            <person name="Hemerly A."/>
            <person name="Teixeira K."/>
            <person name="Schwab S."/>
            <person name="Araujo J."/>
            <person name="Oliveira A."/>
            <person name="Franca L."/>
            <person name="Magalhaes V."/>
            <person name="Alqueres S."/>
            <person name="Cardoso A."/>
            <person name="Almeida W."/>
            <person name="Loureiro M.M."/>
            <person name="Nogueira E."/>
            <person name="Cidade D."/>
            <person name="Oliveira D."/>
            <person name="Simao T."/>
            <person name="Macedo J."/>
            <person name="Valadao A."/>
            <person name="Dreschsel M."/>
            <person name="Freitas F."/>
            <person name="Vidal M."/>
            <person name="Guedes H."/>
            <person name="Rodrigues E."/>
            <person name="Meneses C."/>
            <person name="Brioso P."/>
            <person name="Pozzer L."/>
            <person name="Figueiredo D."/>
            <person name="Montano H."/>
            <person name="Junior J."/>
            <person name="de Souza Filho G."/>
            <person name="Martin Quintana Flores V."/>
            <person name="Ferreira B."/>
            <person name="Branco A."/>
            <person name="Gonzalez P."/>
            <person name="Guillobel H."/>
            <person name="Lemos M."/>
            <person name="Seibel L."/>
            <person name="Macedo J."/>
            <person name="Alves-Ferreira M."/>
            <person name="Sachetto-Martins G."/>
            <person name="Coelho A."/>
            <person name="Santos E."/>
            <person name="Amaral G."/>
            <person name="Neves A."/>
            <person name="Pacheco A.B."/>
            <person name="Carvalho D."/>
            <person name="Lery L."/>
            <person name="Bisch P."/>
            <person name="Rossle S.C."/>
            <person name="Urmenyi T."/>
            <person name="Rael Pereira A."/>
            <person name="Silva R."/>
            <person name="Rondinelli E."/>
            <person name="von Kruger W."/>
            <person name="Martins O."/>
            <person name="Baldani J.I."/>
            <person name="Ferreira P.C."/>
        </authorList>
    </citation>
    <scope>NUCLEOTIDE SEQUENCE [LARGE SCALE GENOMIC DNA]</scope>
    <source>
        <strain>ATCC 49037 / DSM 5601 / CCUG 37298 / CIP 103539 / LMG 7603 / PAl5</strain>
    </source>
</reference>
<reference key="2">
    <citation type="journal article" date="2010" name="Stand. Genomic Sci.">
        <title>Two genome sequences of the same bacterial strain, Gluconacetobacter diazotrophicus PAl 5, suggest a new standard in genome sequence submission.</title>
        <authorList>
            <person name="Giongo A."/>
            <person name="Tyler H.L."/>
            <person name="Zipperer U.N."/>
            <person name="Triplett E.W."/>
        </authorList>
    </citation>
    <scope>NUCLEOTIDE SEQUENCE [LARGE SCALE GENOMIC DNA]</scope>
    <source>
        <strain>ATCC 49037 / DSM 5601 / CCUG 37298 / CIP 103539 / LMG 7603 / PAl5</strain>
    </source>
</reference>
<organism>
    <name type="scientific">Gluconacetobacter diazotrophicus (strain ATCC 49037 / DSM 5601 / CCUG 37298 / CIP 103539 / LMG 7603 / PAl5)</name>
    <dbReference type="NCBI Taxonomy" id="272568"/>
    <lineage>
        <taxon>Bacteria</taxon>
        <taxon>Pseudomonadati</taxon>
        <taxon>Pseudomonadota</taxon>
        <taxon>Alphaproteobacteria</taxon>
        <taxon>Acetobacterales</taxon>
        <taxon>Acetobacteraceae</taxon>
        <taxon>Gluconacetobacter</taxon>
    </lineage>
</organism>
<dbReference type="EMBL" id="AM889285">
    <property type="protein sequence ID" value="CAP54494.1"/>
    <property type="molecule type" value="Genomic_DNA"/>
</dbReference>
<dbReference type="EMBL" id="CP001189">
    <property type="protein sequence ID" value="ACI51236.1"/>
    <property type="molecule type" value="Genomic_DNA"/>
</dbReference>
<dbReference type="RefSeq" id="WP_012223040.1">
    <property type="nucleotide sequence ID" value="NC_010125.1"/>
</dbReference>
<dbReference type="KEGG" id="gdi:GDI0551"/>
<dbReference type="KEGG" id="gdj:Gdia_1457"/>
<dbReference type="eggNOG" id="COG1671">
    <property type="taxonomic scope" value="Bacteria"/>
</dbReference>
<dbReference type="HOGENOM" id="CLU_106619_2_1_5"/>
<dbReference type="OrthoDB" id="9798918at2"/>
<dbReference type="Proteomes" id="UP000001176">
    <property type="component" value="Chromosome"/>
</dbReference>
<dbReference type="CDD" id="cd18720">
    <property type="entry name" value="PIN_YqxD-like"/>
    <property type="match status" value="1"/>
</dbReference>
<dbReference type="HAMAP" id="MF_00489">
    <property type="entry name" value="UPF0178"/>
    <property type="match status" value="1"/>
</dbReference>
<dbReference type="InterPro" id="IPR003791">
    <property type="entry name" value="UPF0178"/>
</dbReference>
<dbReference type="NCBIfam" id="NF001095">
    <property type="entry name" value="PRK00124.1"/>
    <property type="match status" value="1"/>
</dbReference>
<dbReference type="PANTHER" id="PTHR35146">
    <property type="entry name" value="UPF0178 PROTEIN YAII"/>
    <property type="match status" value="1"/>
</dbReference>
<dbReference type="PANTHER" id="PTHR35146:SF1">
    <property type="entry name" value="UPF0178 PROTEIN YAII"/>
    <property type="match status" value="1"/>
</dbReference>
<dbReference type="Pfam" id="PF02639">
    <property type="entry name" value="DUF188"/>
    <property type="match status" value="1"/>
</dbReference>
<protein>
    <recommendedName>
        <fullName evidence="1">UPF0178 protein GDI0551/Gdia_1457</fullName>
    </recommendedName>
</protein>